<feature type="initiator methionine" description="Removed" evidence="3">
    <location>
        <position position="1"/>
    </location>
</feature>
<feature type="chain" id="PRO_0000378578" description="THO complex subunit 4">
    <location>
        <begin position="2"/>
        <end position="257"/>
    </location>
</feature>
<feature type="domain" description="RRM" evidence="4">
    <location>
        <begin position="106"/>
        <end position="183"/>
    </location>
</feature>
<feature type="region of interest" description="Disordered" evidence="5">
    <location>
        <begin position="1"/>
        <end position="89"/>
    </location>
</feature>
<feature type="region of interest" description="N-terminal UAP56-binding motif" evidence="3">
    <location>
        <begin position="5"/>
        <end position="13"/>
    </location>
</feature>
<feature type="region of interest" description="RNA-binding domain 1" evidence="3">
    <location>
        <begin position="13"/>
        <end position="104"/>
    </location>
</feature>
<feature type="region of interest" description="Sufficient for RNA-binding, interaction with NXF1-NXT1 heterodimer" evidence="3">
    <location>
        <begin position="16"/>
        <end position="37"/>
    </location>
</feature>
<feature type="region of interest" description="Required for interactions with EJC and multimerization" evidence="3">
    <location>
        <begin position="55"/>
        <end position="182"/>
    </location>
</feature>
<feature type="region of interest" description="RNA-binding domain 2" evidence="3">
    <location>
        <begin position="182"/>
        <end position="243"/>
    </location>
</feature>
<feature type="region of interest" description="Disordered" evidence="5">
    <location>
        <begin position="186"/>
        <end position="257"/>
    </location>
</feature>
<feature type="region of interest" description="C-terminal UAP56-binding motif" evidence="3">
    <location>
        <begin position="243"/>
        <end position="251"/>
    </location>
</feature>
<feature type="short sequence motif" description="WXHD motif" evidence="3">
    <location>
        <begin position="87"/>
        <end position="90"/>
    </location>
</feature>
<feature type="compositionally biased region" description="Basic and acidic residues" evidence="5">
    <location>
        <begin position="1"/>
        <end position="14"/>
    </location>
</feature>
<feature type="compositionally biased region" description="Gly residues" evidence="5">
    <location>
        <begin position="21"/>
        <end position="42"/>
    </location>
</feature>
<feature type="compositionally biased region" description="Low complexity" evidence="5">
    <location>
        <begin position="43"/>
        <end position="64"/>
    </location>
</feature>
<feature type="compositionally biased region" description="Polar residues" evidence="5">
    <location>
        <begin position="186"/>
        <end position="196"/>
    </location>
</feature>
<feature type="compositionally biased region" description="Gly residues" evidence="5">
    <location>
        <begin position="205"/>
        <end position="216"/>
    </location>
</feature>
<feature type="compositionally biased region" description="Basic residues" evidence="5">
    <location>
        <begin position="217"/>
        <end position="229"/>
    </location>
</feature>
<feature type="modified residue" description="N-acetylalanine" evidence="3">
    <location>
        <position position="2"/>
    </location>
</feature>
<feature type="modified residue" description="Phosphoserine" evidence="3">
    <location>
        <position position="8"/>
    </location>
</feature>
<feature type="modified residue" description="Asymmetric dimethylarginine; alternate" evidence="2">
    <location>
        <position position="38"/>
    </location>
</feature>
<feature type="modified residue" description="Omega-N-methylarginine; alternate" evidence="3">
    <location>
        <position position="38"/>
    </location>
</feature>
<feature type="modified residue" description="Omega-N-methylarginine" evidence="3">
    <location>
        <position position="58"/>
    </location>
</feature>
<feature type="modified residue" description="Omega-N-methylarginine" evidence="3">
    <location>
        <position position="63"/>
    </location>
</feature>
<feature type="modified residue" description="Omega-N-methylarginine" evidence="3">
    <location>
        <position position="71"/>
    </location>
</feature>
<feature type="modified residue" description="N6-acetyllysine" evidence="2">
    <location>
        <position position="86"/>
    </location>
</feature>
<feature type="modified residue" description="Phosphoserine" evidence="3">
    <location>
        <position position="94"/>
    </location>
</feature>
<feature type="modified residue" description="Citrulline" evidence="1">
    <location>
        <position position="141"/>
    </location>
</feature>
<feature type="modified residue" description="Asymmetric dimethylarginine; alternate" evidence="2">
    <location>
        <position position="197"/>
    </location>
</feature>
<feature type="modified residue" description="Omega-N-methylarginine; alternate" evidence="2">
    <location>
        <position position="197"/>
    </location>
</feature>
<feature type="modified residue" description="Asymmetric dimethylarginine; alternate" evidence="3">
    <location>
        <position position="204"/>
    </location>
</feature>
<feature type="modified residue" description="Dimethylated arginine; alternate" evidence="3">
    <location>
        <position position="204"/>
    </location>
</feature>
<feature type="modified residue" description="Omega-N-methylarginine; alternate" evidence="2">
    <location>
        <position position="204"/>
    </location>
</feature>
<feature type="modified residue" description="Omega-N-methylarginine" evidence="3">
    <location>
        <position position="220"/>
    </location>
</feature>
<feature type="modified residue" description="N6-methyllysine" evidence="3">
    <location>
        <position position="235"/>
    </location>
</feature>
<feature type="modified residue" description="Phosphoserine" evidence="3">
    <location>
        <position position="239"/>
    </location>
</feature>
<gene>
    <name type="primary">ALYREF</name>
    <name type="synonym">ALY</name>
    <name type="synonym">BEF</name>
    <name type="synonym">THOC4</name>
</gene>
<reference key="1">
    <citation type="submission" date="2005-08" db="EMBL/GenBank/DDBJ databases">
        <authorList>
            <consortium name="NIH - Mammalian Gene Collection (MGC) project"/>
        </authorList>
    </citation>
    <scope>NUCLEOTIDE SEQUENCE [LARGE SCALE MRNA]</scope>
    <source>
        <strain>Crossbred X Angus</strain>
        <tissue>Ileum</tissue>
    </source>
</reference>
<protein>
    <recommendedName>
        <fullName>THO complex subunit 4</fullName>
        <shortName>Tho4</shortName>
    </recommendedName>
    <alternativeName>
        <fullName>Ally of AML-1 and LEF-1</fullName>
    </alternativeName>
    <alternativeName>
        <fullName>Aly/REF export factor</fullName>
    </alternativeName>
    <alternativeName>
        <fullName>Transcriptional coactivator Aly/REF</fullName>
    </alternativeName>
    <alternativeName>
        <fullName>bZIP-enhancing factor BEF</fullName>
    </alternativeName>
</protein>
<keyword id="KW-0007">Acetylation</keyword>
<keyword id="KW-0143">Chaperone</keyword>
<keyword id="KW-0164">Citrullination</keyword>
<keyword id="KW-0963">Cytoplasm</keyword>
<keyword id="KW-0488">Methylation</keyword>
<keyword id="KW-0507">mRNA processing</keyword>
<keyword id="KW-0508">mRNA splicing</keyword>
<keyword id="KW-0509">mRNA transport</keyword>
<keyword id="KW-0539">Nucleus</keyword>
<keyword id="KW-0597">Phosphoprotein</keyword>
<keyword id="KW-1185">Reference proteome</keyword>
<keyword id="KW-0694">RNA-binding</keyword>
<keyword id="KW-0747">Spliceosome</keyword>
<keyword id="KW-0813">Transport</keyword>
<sequence length="257" mass="26953">MADKMDMSLDDIIKLNRSQRGGRGGGRGRGRAGSQGGRGGGAQAAARVNRGGGPIRNRPAIARGAAGGGGRNRPAPYSRPKQLPDKWQHDLFDSGFGGGAGVETGGKLLVSNLDFGVSDADIQELFAEFGTLKKAAVHYDRSGRSLGTADVHFERKADALKAMKQYNGVPLDGRPMNIQLVTSQIDTQRRPAQSVNRGGMTRNRGSGGFGGGGGTRRGTRGGSRGRGRGTGRSSKQQLSAEELDAQLDAYNARMDTS</sequence>
<evidence type="ECO:0000250" key="1"/>
<evidence type="ECO:0000250" key="2">
    <source>
        <dbReference type="UniProtKB" id="O08583"/>
    </source>
</evidence>
<evidence type="ECO:0000250" key="3">
    <source>
        <dbReference type="UniProtKB" id="Q86V81"/>
    </source>
</evidence>
<evidence type="ECO:0000255" key="4">
    <source>
        <dbReference type="PROSITE-ProRule" id="PRU00176"/>
    </source>
</evidence>
<evidence type="ECO:0000256" key="5">
    <source>
        <dbReference type="SAM" id="MobiDB-lite"/>
    </source>
</evidence>
<evidence type="ECO:0000305" key="6"/>
<dbReference type="EMBL" id="BC102384">
    <property type="protein sequence ID" value="AAI02385.1"/>
    <property type="molecule type" value="mRNA"/>
</dbReference>
<dbReference type="RefSeq" id="NP_001030494.1">
    <property type="nucleotide sequence ID" value="NM_001035417.2"/>
</dbReference>
<dbReference type="BMRB" id="Q3T0I4"/>
<dbReference type="SMR" id="Q3T0I4"/>
<dbReference type="FunCoup" id="Q3T0I4">
    <property type="interactions" value="3931"/>
</dbReference>
<dbReference type="STRING" id="9913.ENSBTAP00000011202"/>
<dbReference type="PaxDb" id="9913-ENSBTAP00000011202"/>
<dbReference type="PeptideAtlas" id="Q3T0I4"/>
<dbReference type="Ensembl" id="ENSBTAT00000011202.4">
    <property type="protein sequence ID" value="ENSBTAP00000011202.2"/>
    <property type="gene ID" value="ENSBTAG00000008498.4"/>
</dbReference>
<dbReference type="GeneID" id="537706"/>
<dbReference type="KEGG" id="bta:537706"/>
<dbReference type="CTD" id="10189"/>
<dbReference type="VEuPathDB" id="HostDB:ENSBTAG00000008498"/>
<dbReference type="VGNC" id="VGNC:25855">
    <property type="gene designation" value="ALYREF"/>
</dbReference>
<dbReference type="eggNOG" id="KOG0533">
    <property type="taxonomic scope" value="Eukaryota"/>
</dbReference>
<dbReference type="GeneTree" id="ENSGT00410000025615"/>
<dbReference type="HOGENOM" id="CLU_052367_0_1_1"/>
<dbReference type="InParanoid" id="Q3T0I4"/>
<dbReference type="OMA" id="RNDYPRD"/>
<dbReference type="OrthoDB" id="1049195at2759"/>
<dbReference type="TreeFam" id="TF313312"/>
<dbReference type="Reactome" id="R-BTA-159227">
    <property type="pathway name" value="Transport of the SLBP independent Mature mRNA"/>
</dbReference>
<dbReference type="Reactome" id="R-BTA-159230">
    <property type="pathway name" value="Transport of the SLBP Dependant Mature mRNA"/>
</dbReference>
<dbReference type="Reactome" id="R-BTA-159231">
    <property type="pathway name" value="Transport of Mature mRNA Derived from an Intronless Transcript"/>
</dbReference>
<dbReference type="Reactome" id="R-BTA-159236">
    <property type="pathway name" value="Transport of Mature mRNA derived from an Intron-Containing Transcript"/>
</dbReference>
<dbReference type="Reactome" id="R-BTA-72163">
    <property type="pathway name" value="mRNA Splicing - Major Pathway"/>
</dbReference>
<dbReference type="Reactome" id="R-BTA-72187">
    <property type="pathway name" value="mRNA 3'-end processing"/>
</dbReference>
<dbReference type="Reactome" id="R-BTA-73856">
    <property type="pathway name" value="RNA Polymerase II Transcription Termination"/>
</dbReference>
<dbReference type="Proteomes" id="UP000009136">
    <property type="component" value="Chromosome 19"/>
</dbReference>
<dbReference type="Bgee" id="ENSBTAG00000008498">
    <property type="expression patterns" value="Expressed in spermatocyte and 106 other cell types or tissues"/>
</dbReference>
<dbReference type="GO" id="GO:0005737">
    <property type="term" value="C:cytoplasm"/>
    <property type="evidence" value="ECO:0000250"/>
    <property type="project" value="UniProtKB"/>
</dbReference>
<dbReference type="GO" id="GO:0016607">
    <property type="term" value="C:nuclear speck"/>
    <property type="evidence" value="ECO:0007669"/>
    <property type="project" value="UniProtKB-SubCell"/>
</dbReference>
<dbReference type="GO" id="GO:0005634">
    <property type="term" value="C:nucleus"/>
    <property type="evidence" value="ECO:0000250"/>
    <property type="project" value="UniProtKB"/>
</dbReference>
<dbReference type="GO" id="GO:0005681">
    <property type="term" value="C:spliceosomal complex"/>
    <property type="evidence" value="ECO:0007669"/>
    <property type="project" value="UniProtKB-KW"/>
</dbReference>
<dbReference type="GO" id="GO:0062153">
    <property type="term" value="F:C5-methylcytidine-containing RNA reader activity"/>
    <property type="evidence" value="ECO:0000250"/>
    <property type="project" value="UniProtKB"/>
</dbReference>
<dbReference type="GO" id="GO:0003729">
    <property type="term" value="F:mRNA binding"/>
    <property type="evidence" value="ECO:0000318"/>
    <property type="project" value="GO_Central"/>
</dbReference>
<dbReference type="GO" id="GO:0006406">
    <property type="term" value="P:mRNA export from nucleus"/>
    <property type="evidence" value="ECO:0000318"/>
    <property type="project" value="GO_Central"/>
</dbReference>
<dbReference type="GO" id="GO:0006397">
    <property type="term" value="P:mRNA processing"/>
    <property type="evidence" value="ECO:0007669"/>
    <property type="project" value="UniProtKB-KW"/>
</dbReference>
<dbReference type="GO" id="GO:0006405">
    <property type="term" value="P:RNA export from nucleus"/>
    <property type="evidence" value="ECO:0000250"/>
    <property type="project" value="UniProtKB"/>
</dbReference>
<dbReference type="GO" id="GO:0008380">
    <property type="term" value="P:RNA splicing"/>
    <property type="evidence" value="ECO:0007669"/>
    <property type="project" value="UniProtKB-KW"/>
</dbReference>
<dbReference type="CDD" id="cd12680">
    <property type="entry name" value="RRM_THOC4"/>
    <property type="match status" value="1"/>
</dbReference>
<dbReference type="FunFam" id="3.30.70.330:FF:000273">
    <property type="entry name" value="THO complex subunit 4"/>
    <property type="match status" value="1"/>
</dbReference>
<dbReference type="Gene3D" id="3.30.70.330">
    <property type="match status" value="1"/>
</dbReference>
<dbReference type="InterPro" id="IPR051229">
    <property type="entry name" value="ALYREF_mRNA_export"/>
</dbReference>
<dbReference type="InterPro" id="IPR025715">
    <property type="entry name" value="FoP_C"/>
</dbReference>
<dbReference type="InterPro" id="IPR012677">
    <property type="entry name" value="Nucleotide-bd_a/b_plait_sf"/>
</dbReference>
<dbReference type="InterPro" id="IPR035979">
    <property type="entry name" value="RBD_domain_sf"/>
</dbReference>
<dbReference type="InterPro" id="IPR000504">
    <property type="entry name" value="RRM_dom"/>
</dbReference>
<dbReference type="PANTHER" id="PTHR19965">
    <property type="entry name" value="RNA AND EXPORT FACTOR BINDING PROTEIN"/>
    <property type="match status" value="1"/>
</dbReference>
<dbReference type="PANTHER" id="PTHR19965:SF82">
    <property type="entry name" value="THO COMPLEX SUBUNIT 4"/>
    <property type="match status" value="1"/>
</dbReference>
<dbReference type="Pfam" id="PF13865">
    <property type="entry name" value="FoP_duplication"/>
    <property type="match status" value="1"/>
</dbReference>
<dbReference type="Pfam" id="PF00076">
    <property type="entry name" value="RRM_1"/>
    <property type="match status" value="1"/>
</dbReference>
<dbReference type="SMART" id="SM01218">
    <property type="entry name" value="FoP_duplication"/>
    <property type="match status" value="1"/>
</dbReference>
<dbReference type="SMART" id="SM00360">
    <property type="entry name" value="RRM"/>
    <property type="match status" value="1"/>
</dbReference>
<dbReference type="SUPFAM" id="SSF54928">
    <property type="entry name" value="RNA-binding domain, RBD"/>
    <property type="match status" value="1"/>
</dbReference>
<dbReference type="PROSITE" id="PS50102">
    <property type="entry name" value="RRM"/>
    <property type="match status" value="1"/>
</dbReference>
<organism>
    <name type="scientific">Bos taurus</name>
    <name type="common">Bovine</name>
    <dbReference type="NCBI Taxonomy" id="9913"/>
    <lineage>
        <taxon>Eukaryota</taxon>
        <taxon>Metazoa</taxon>
        <taxon>Chordata</taxon>
        <taxon>Craniata</taxon>
        <taxon>Vertebrata</taxon>
        <taxon>Euteleostomi</taxon>
        <taxon>Mammalia</taxon>
        <taxon>Eutheria</taxon>
        <taxon>Laurasiatheria</taxon>
        <taxon>Artiodactyla</taxon>
        <taxon>Ruminantia</taxon>
        <taxon>Pecora</taxon>
        <taxon>Bovidae</taxon>
        <taxon>Bovinae</taxon>
        <taxon>Bos</taxon>
    </lineage>
</organism>
<proteinExistence type="evidence at transcript level"/>
<accession>Q3T0I4</accession>
<name>THOC4_BOVIN</name>
<comment type="function">
    <text evidence="3">Functions as an mRNA export adapter; component of the transcription/export (TREX) complex which is thought to couple mRNA transcription, processing and nuclear export, and specifically associates with spliced mRNA and not with unspliced pre-mRNA. TREX is recruited to spliced mRNAs by a transcription-independent mechanism, binds to mRNA upstream of the exon-junction complex (EJC) and is recruited in a splicing- and cap-dependent manner to a region near the 5' end of the mRNA where it functions in mRNA export to the cytoplasm via the TAP/NXF1 pathway. Involved in the nuclear export of intronless mRNA; proposed to be recruited to intronless mRNA by ATP-bound DDX39B. Plays a key role in mRNP recognition and mRNA packaging by bridging the mRNP-bound EJC and the TREX core complex. TREX recruitment occurs via an interaction between ALYREF/THOC4 and the cap-binding protein NCBP1. Required for TREX complex assembly and for linking DDX39B to the cap-binding complex (CBC). Binds mRNA which is thought to be transferred to the NXF1-NXT1 heterodimer for export (TAP/NXF1 pathway). In conjunction with THOC5 functions in NXF1-NXT1 mediated nuclear export of HSP70 mRNA; both proteins enhance the RNA binding activity of NXF1 and are required for NXF1 localization to the nuclear rim. Involved in mRNA export of C5-methylcytosine (m5C)-containing mRNAs: specifically recognizes and binds m5C mRNAs and mediates their nucleo-cytoplasmic shuttling. Acts as a chaperone and promotes the dimerization of transcription factors containing basic leucine zipper (bZIP) domains and thereby promotes transcriptional activation. Involved in transcription elongation and genome stability.</text>
</comment>
<comment type="subunit">
    <text evidence="3">Homomultimer; predominantly hexamer when bound to EJC-RNA complex. Component of the transcription/export (TREX) complex at least composed of ALYREF/THOC4, DDX39B, SARNP/CIP29, CHTOP and the THO subcomplex (THOC1, THOC2, THOC3, THOC5, THOC6 and THOC7); in the complex interacts (via UAP56-binding motif) with DDX39B with low affinity but this interaction is likely stabilized by multimerization. TREX seems to have a dynamic structure involving ATP-dependent remodeling; in the complex interacts with THOC1, THOC2 and THOC5. Component of the ALYREF/THOC4-EJC-RNA complex; in the complex interacts (via the WXHD motif) with EIF4A3 and interacts (via the RRM domain) with MAGOH; these interactions are likely specific to RNA-bound EJC. Bridges the THO-DDX39B and EJC-RNA complexes to form the TREX-EJC-RNA complex; this interaction is essential for mRNP recognition and mRNA packaging. Identified in the spliceosome C complex. Found in a mRNP complex with UPF3A and UPF3B. Interacts with RBM8A, RBM15B, NCBP1, LEF1, RUNX1, RNPS1, SRRM1, IWS1 and EXOSC1. Interacts with RBM15B. Interacts with NXF1; the interaction is direct. Interacts with IVNS1ABP (via BACK domain); the interaction is indirect and likely plays a role in mRNA nuclear export.</text>
</comment>
<comment type="subcellular location">
    <subcellularLocation>
        <location evidence="3">Nucleus</location>
    </subcellularLocation>
    <subcellularLocation>
        <location evidence="3">Nucleus speckle</location>
    </subcellularLocation>
    <subcellularLocation>
        <location evidence="3">Cytoplasm</location>
    </subcellularLocation>
    <text evidence="3">Colocalizes with the core EJC, ALYREF/THOC4, NXF1 and DDX39B in the nucleus and nuclear speckles. Travels to the cytoplasm as part of the exon junction complex (EJC) bound to mRNA. Localizes to regions surrounding nuclear speckles known as perispeckles in which TREX complex assembly seems to occur.</text>
</comment>
<comment type="PTM">
    <text evidence="1">Arg-50 and Arg-204 are dimethylated, probably to asymmetric dimethylarginine.</text>
</comment>
<comment type="PTM">
    <text evidence="1">Citrullinated by PADI4.</text>
</comment>
<comment type="similarity">
    <text evidence="6">Belongs to the ALYREF family.</text>
</comment>